<protein>
    <recommendedName>
        <fullName>Probable spore germination protein GerPA</fullName>
    </recommendedName>
</protein>
<comment type="function">
    <text>Required for the formation of functionally normal spores. Could be involved in the establishment of normal spore coat structure and/or permeability, which allows the access of germinants to their receptor.</text>
</comment>
<comment type="developmental stage">
    <text>Expressed during sporulation, around the time of spore coat synthesis and assembly, in mother cell compartment.</text>
</comment>
<comment type="induction">
    <text>Expression is sigma K-dependent and negatively regulated by GerE.</text>
</comment>
<comment type="similarity">
    <text evidence="1">Belongs to the GerPA/GerPF family.</text>
</comment>
<name>GERPA_BACCE</name>
<accession>P62165</accession>
<accession>O68683</accession>
<sequence>MPAMVGHIRIVNIGSSGIFHIGDVFAIRPISYSRAFAGAGSFNVGDNVSVYNYQSATTVNDSDVVDQAIIGST</sequence>
<feature type="chain" id="PRO_0000105872" description="Probable spore germination protein GerPA">
    <location>
        <begin position="1"/>
        <end position="73"/>
    </location>
</feature>
<evidence type="ECO:0000305" key="1"/>
<organism>
    <name type="scientific">Bacillus cereus</name>
    <dbReference type="NCBI Taxonomy" id="1396"/>
    <lineage>
        <taxon>Bacteria</taxon>
        <taxon>Bacillati</taxon>
        <taxon>Bacillota</taxon>
        <taxon>Bacilli</taxon>
        <taxon>Bacillales</taxon>
        <taxon>Bacillaceae</taxon>
        <taxon>Bacillus</taxon>
        <taxon>Bacillus cereus group</taxon>
    </lineage>
</organism>
<dbReference type="EMBL" id="AF053927">
    <property type="protein sequence ID" value="AAC08012.1"/>
    <property type="molecule type" value="Genomic_DNA"/>
</dbReference>
<dbReference type="RefSeq" id="WP_001111188.1">
    <property type="nucleotide sequence ID" value="NZ_WBPP01000037.1"/>
</dbReference>
<dbReference type="GeneID" id="83634774"/>
<dbReference type="eggNOG" id="ENOG50332FH">
    <property type="taxonomic scope" value="Bacteria"/>
</dbReference>
<dbReference type="OMA" id="IHIGDCI"/>
<dbReference type="GO" id="GO:0030435">
    <property type="term" value="P:sporulation resulting in formation of a cellular spore"/>
    <property type="evidence" value="ECO:0007669"/>
    <property type="project" value="UniProtKB-KW"/>
</dbReference>
<dbReference type="InterPro" id="IPR019618">
    <property type="entry name" value="Spore_germination_GerPA"/>
</dbReference>
<dbReference type="PANTHER" id="PTHR37808:SF3">
    <property type="entry name" value="SPORE GERMINATION PROTEIN GERPA-RELATED"/>
    <property type="match status" value="1"/>
</dbReference>
<dbReference type="PANTHER" id="PTHR37808">
    <property type="entry name" value="SPORE GERMINATION PROTEIN-LIKE PROTEIN YDZR-RELATED"/>
    <property type="match status" value="1"/>
</dbReference>
<dbReference type="Pfam" id="PF10676">
    <property type="entry name" value="gerPA"/>
    <property type="match status" value="1"/>
</dbReference>
<proteinExistence type="evidence at protein level"/>
<keyword id="KW-0309">Germination</keyword>
<keyword id="KW-0749">Sporulation</keyword>
<gene>
    <name type="primary">gerPA</name>
</gene>
<reference key="1">
    <citation type="journal article" date="2000" name="J. Bacteriol.">
        <title>Mutations in the gerP locus of Bacillus subtilis and Bacillus cereus affect access of germinants to their targets in spores.</title>
        <authorList>
            <person name="Behravan J."/>
            <person name="Chirakkal H."/>
            <person name="Masson A."/>
            <person name="Moir A."/>
        </authorList>
    </citation>
    <scope>NUCLEOTIDE SEQUENCE [GENOMIC DNA]</scope>
    <scope>CHARACTERIZATION</scope>
    <source>
        <strain>ATCC 10876 / DSM 9378 / NRRL B-569</strain>
    </source>
</reference>